<feature type="signal peptide" evidence="2">
    <location>
        <begin position="1"/>
        <end position="21"/>
    </location>
</feature>
<feature type="propeptide" id="PRO_0000398423" evidence="1">
    <location>
        <begin position="22"/>
        <end position="29"/>
    </location>
</feature>
<feature type="peptide" id="PRO_0000398424" description="U10-theraphotoxin-Cg1a 3">
    <location>
        <begin position="30"/>
        <end position="66"/>
    </location>
</feature>
<feature type="disulfide bond" evidence="1">
    <location>
        <begin position="31"/>
        <end position="46"/>
    </location>
</feature>
<feature type="disulfide bond" evidence="1">
    <location>
        <begin position="38"/>
        <end position="51"/>
    </location>
</feature>
<feature type="disulfide bond" evidence="1">
    <location>
        <begin position="45"/>
        <end position="58"/>
    </location>
</feature>
<dbReference type="EMBL" id="EU233859">
    <property type="protein sequence ID" value="ABY71678.1"/>
    <property type="molecule type" value="mRNA"/>
</dbReference>
<dbReference type="SMR" id="B1P1C8"/>
<dbReference type="ArachnoServer" id="AS000807">
    <property type="toxin name" value="U10-theraphotoxin-Cg1a"/>
</dbReference>
<dbReference type="GO" id="GO:0005576">
    <property type="term" value="C:extracellular region"/>
    <property type="evidence" value="ECO:0007669"/>
    <property type="project" value="UniProtKB-SubCell"/>
</dbReference>
<dbReference type="GO" id="GO:0008200">
    <property type="term" value="F:ion channel inhibitor activity"/>
    <property type="evidence" value="ECO:0007669"/>
    <property type="project" value="InterPro"/>
</dbReference>
<dbReference type="GO" id="GO:0090729">
    <property type="term" value="F:toxin activity"/>
    <property type="evidence" value="ECO:0007669"/>
    <property type="project" value="UniProtKB-KW"/>
</dbReference>
<dbReference type="InterPro" id="IPR011696">
    <property type="entry name" value="Huwentoxin-1"/>
</dbReference>
<dbReference type="InterPro" id="IPR013140">
    <property type="entry name" value="Huwentoxin_CS1"/>
</dbReference>
<dbReference type="Pfam" id="PF07740">
    <property type="entry name" value="Toxin_12"/>
    <property type="match status" value="1"/>
</dbReference>
<dbReference type="SUPFAM" id="SSF57059">
    <property type="entry name" value="omega toxin-like"/>
    <property type="match status" value="1"/>
</dbReference>
<dbReference type="PROSITE" id="PS60021">
    <property type="entry name" value="HWTX_1"/>
    <property type="match status" value="1"/>
</dbReference>
<organism>
    <name type="scientific">Chilobrachys guangxiensis</name>
    <name type="common">Chinese earth tiger tarantula</name>
    <name type="synonym">Chilobrachys jingzhao</name>
    <dbReference type="NCBI Taxonomy" id="278060"/>
    <lineage>
        <taxon>Eukaryota</taxon>
        <taxon>Metazoa</taxon>
        <taxon>Ecdysozoa</taxon>
        <taxon>Arthropoda</taxon>
        <taxon>Chelicerata</taxon>
        <taxon>Arachnida</taxon>
        <taxon>Araneae</taxon>
        <taxon>Mygalomorphae</taxon>
        <taxon>Theraphosidae</taxon>
        <taxon>Chilobrachys</taxon>
    </lineage>
</organism>
<reference key="1">
    <citation type="journal article" date="2008" name="Cell. Mol. Life Sci.">
        <title>Molecular diversity and evolution of cystine knot toxins of the tarantula Chilobrachys jingzhao.</title>
        <authorList>
            <person name="Chen J."/>
            <person name="Deng M."/>
            <person name="He Q."/>
            <person name="Meng E."/>
            <person name="Jiang L."/>
            <person name="Liao Z."/>
            <person name="Rong M."/>
            <person name="Liang S."/>
        </authorList>
    </citation>
    <scope>NUCLEOTIDE SEQUENCE [LARGE SCALE MRNA]</scope>
    <source>
        <tissue>Venom gland</tissue>
    </source>
</reference>
<reference key="2">
    <citation type="journal article" date="2007" name="Proteomics">
        <title>Proteomic and peptidomic analysis of the venom from Chinese tarantula Chilobrachys jingzhao.</title>
        <authorList>
            <person name="Liao Z."/>
            <person name="Cao J."/>
            <person name="Li S."/>
            <person name="Yan X."/>
            <person name="Hu W."/>
            <person name="He Q."/>
            <person name="Chen J."/>
            <person name="Tang J."/>
            <person name="Xie J."/>
            <person name="Liang S."/>
        </authorList>
    </citation>
    <scope>PROTEIN SEQUENCE OF 30-41</scope>
    <scope>IDENTIFICATION BY MASS SPECTROMETRY</scope>
    <source>
        <tissue>Venom</tissue>
    </source>
</reference>
<keyword id="KW-0903">Direct protein sequencing</keyword>
<keyword id="KW-1015">Disulfide bond</keyword>
<keyword id="KW-0872">Ion channel impairing toxin</keyword>
<keyword id="KW-0960">Knottin</keyword>
<keyword id="KW-0964">Secreted</keyword>
<keyword id="KW-0732">Signal</keyword>
<keyword id="KW-0800">Toxin</keyword>
<proteinExistence type="evidence at protein level"/>
<comment type="function">
    <text>Probable ion channel inhibitor.</text>
</comment>
<comment type="subcellular location">
    <subcellularLocation>
        <location evidence="1">Secreted</location>
    </subcellularLocation>
</comment>
<comment type="tissue specificity">
    <text>Expressed by the venom gland.</text>
</comment>
<comment type="domain">
    <text evidence="1">The presence of a 'disulfide through disulfide knot' structurally defines this protein as a knottin.</text>
</comment>
<comment type="similarity">
    <text evidence="4">Belongs to the neurotoxin 10 (Hwtx-1) family. 29 (Jztx-13) subfamily.</text>
</comment>
<accession>B1P1C8</accession>
<protein>
    <recommendedName>
        <fullName>U10-theraphotoxin-Cg1a 3</fullName>
        <shortName>U10-TRTX-Cg1a</shortName>
    </recommendedName>
    <alternativeName>
        <fullName evidence="5">Jingzhaotoxin-13.3</fullName>
        <shortName evidence="5">JZTX-13.3</shortName>
    </alternativeName>
    <alternativeName>
        <fullName evidence="3">Peptide F5-18.88</fullName>
    </alternativeName>
</protein>
<evidence type="ECO:0000250" key="1"/>
<evidence type="ECO:0000255" key="2"/>
<evidence type="ECO:0000303" key="3">
    <source>
    </source>
</evidence>
<evidence type="ECO:0000305" key="4"/>
<evidence type="ECO:0000312" key="5">
    <source>
        <dbReference type="EMBL" id="ABY71678.1"/>
    </source>
</evidence>
<sequence length="66" mass="7377">MKTSVLFVIFGLALLFCLSFADELEDTGRQCGEFMWKCGAGKPTCCSGYDCSPTWKWCVLKSPGRR</sequence>
<name>JZ13C_CHIGU</name>